<comment type="function">
    <text evidence="1">Catalyzes the reversible adenylation of nicotinate mononucleotide (NaMN) to nicotinic acid adenine dinucleotide (NaAD).</text>
</comment>
<comment type="catalytic activity">
    <reaction evidence="1">
        <text>nicotinate beta-D-ribonucleotide + ATP + H(+) = deamido-NAD(+) + diphosphate</text>
        <dbReference type="Rhea" id="RHEA:22860"/>
        <dbReference type="ChEBI" id="CHEBI:15378"/>
        <dbReference type="ChEBI" id="CHEBI:30616"/>
        <dbReference type="ChEBI" id="CHEBI:33019"/>
        <dbReference type="ChEBI" id="CHEBI:57502"/>
        <dbReference type="ChEBI" id="CHEBI:58437"/>
        <dbReference type="EC" id="2.7.7.18"/>
    </reaction>
</comment>
<comment type="pathway">
    <text evidence="1">Cofactor biosynthesis; NAD(+) biosynthesis; deamido-NAD(+) from nicotinate D-ribonucleotide: step 1/1.</text>
</comment>
<comment type="similarity">
    <text evidence="1">Belongs to the NadD family.</text>
</comment>
<evidence type="ECO:0000255" key="1">
    <source>
        <dbReference type="HAMAP-Rule" id="MF_00244"/>
    </source>
</evidence>
<reference key="1">
    <citation type="journal article" date="2005" name="Science">
        <title>Genome streamlining in a cosmopolitan oceanic bacterium.</title>
        <authorList>
            <person name="Giovannoni S.J."/>
            <person name="Tripp H.J."/>
            <person name="Givan S."/>
            <person name="Podar M."/>
            <person name="Vergin K.L."/>
            <person name="Baptista D."/>
            <person name="Bibbs L."/>
            <person name="Eads J."/>
            <person name="Richardson T.H."/>
            <person name="Noordewier M."/>
            <person name="Rappe M.S."/>
            <person name="Short J.M."/>
            <person name="Carrington J.C."/>
            <person name="Mathur E.J."/>
        </authorList>
    </citation>
    <scope>NUCLEOTIDE SEQUENCE [LARGE SCALE GENOMIC DNA]</scope>
    <source>
        <strain>HTCC1062</strain>
    </source>
</reference>
<proteinExistence type="inferred from homology"/>
<feature type="chain" id="PRO_0000336717" description="Probable nicotinate-nucleotide adenylyltransferase">
    <location>
        <begin position="1"/>
        <end position="180"/>
    </location>
</feature>
<accession>Q4FP43</accession>
<keyword id="KW-0067">ATP-binding</keyword>
<keyword id="KW-0520">NAD</keyword>
<keyword id="KW-0547">Nucleotide-binding</keyword>
<keyword id="KW-0548">Nucleotidyltransferase</keyword>
<keyword id="KW-0662">Pyridine nucleotide biosynthesis</keyword>
<keyword id="KW-1185">Reference proteome</keyword>
<keyword id="KW-0808">Transferase</keyword>
<dbReference type="EC" id="2.7.7.18" evidence="1"/>
<dbReference type="EMBL" id="CP000084">
    <property type="protein sequence ID" value="AAZ21046.1"/>
    <property type="molecule type" value="Genomic_DNA"/>
</dbReference>
<dbReference type="RefSeq" id="WP_011281554.1">
    <property type="nucleotide sequence ID" value="NC_007205.1"/>
</dbReference>
<dbReference type="SMR" id="Q4FP43"/>
<dbReference type="STRING" id="335992.SAR11_0225"/>
<dbReference type="GeneID" id="66294722"/>
<dbReference type="KEGG" id="pub:SAR11_0225"/>
<dbReference type="eggNOG" id="COG1057">
    <property type="taxonomic scope" value="Bacteria"/>
</dbReference>
<dbReference type="HOGENOM" id="CLU_069765_2_1_5"/>
<dbReference type="OrthoDB" id="5295945at2"/>
<dbReference type="UniPathway" id="UPA00253">
    <property type="reaction ID" value="UER00332"/>
</dbReference>
<dbReference type="Proteomes" id="UP000002528">
    <property type="component" value="Chromosome"/>
</dbReference>
<dbReference type="GO" id="GO:0005524">
    <property type="term" value="F:ATP binding"/>
    <property type="evidence" value="ECO:0007669"/>
    <property type="project" value="UniProtKB-KW"/>
</dbReference>
<dbReference type="GO" id="GO:0004515">
    <property type="term" value="F:nicotinate-nucleotide adenylyltransferase activity"/>
    <property type="evidence" value="ECO:0007669"/>
    <property type="project" value="UniProtKB-UniRule"/>
</dbReference>
<dbReference type="GO" id="GO:0009435">
    <property type="term" value="P:NAD biosynthetic process"/>
    <property type="evidence" value="ECO:0007669"/>
    <property type="project" value="UniProtKB-UniRule"/>
</dbReference>
<dbReference type="CDD" id="cd02165">
    <property type="entry name" value="NMNAT"/>
    <property type="match status" value="1"/>
</dbReference>
<dbReference type="Gene3D" id="3.40.50.620">
    <property type="entry name" value="HUPs"/>
    <property type="match status" value="1"/>
</dbReference>
<dbReference type="HAMAP" id="MF_00244">
    <property type="entry name" value="NaMN_adenylyltr"/>
    <property type="match status" value="1"/>
</dbReference>
<dbReference type="InterPro" id="IPR004821">
    <property type="entry name" value="Cyt_trans-like"/>
</dbReference>
<dbReference type="InterPro" id="IPR005248">
    <property type="entry name" value="NadD/NMNAT"/>
</dbReference>
<dbReference type="InterPro" id="IPR014729">
    <property type="entry name" value="Rossmann-like_a/b/a_fold"/>
</dbReference>
<dbReference type="NCBIfam" id="TIGR00125">
    <property type="entry name" value="cyt_tran_rel"/>
    <property type="match status" value="1"/>
</dbReference>
<dbReference type="NCBIfam" id="TIGR00482">
    <property type="entry name" value="nicotinate (nicotinamide) nucleotide adenylyltransferase"/>
    <property type="match status" value="1"/>
</dbReference>
<dbReference type="PANTHER" id="PTHR39321">
    <property type="entry name" value="NICOTINATE-NUCLEOTIDE ADENYLYLTRANSFERASE-RELATED"/>
    <property type="match status" value="1"/>
</dbReference>
<dbReference type="PANTHER" id="PTHR39321:SF3">
    <property type="entry name" value="PHOSPHOPANTETHEINE ADENYLYLTRANSFERASE"/>
    <property type="match status" value="1"/>
</dbReference>
<dbReference type="Pfam" id="PF01467">
    <property type="entry name" value="CTP_transf_like"/>
    <property type="match status" value="1"/>
</dbReference>
<dbReference type="SUPFAM" id="SSF52374">
    <property type="entry name" value="Nucleotidylyl transferase"/>
    <property type="match status" value="1"/>
</dbReference>
<sequence>MVKPENNLNQKKTKIGILGGTFDPAHKGHLEISKQAKKILELKNIIWAITKQNPFKNTSKTDLKNRIKFAKKIIGKNNFIKVKFYEEKVLSNKTIDLINYLNKDKKFEIYFIMGADNLINFHKWYKWKSIIKKCNLLVFDRQGYKAKSLKSVTYNGVNKNRLSFINFKKVNISSSQLRKI</sequence>
<name>NADD_PELUB</name>
<gene>
    <name evidence="1" type="primary">nadD</name>
    <name type="ordered locus">SAR11_0225</name>
</gene>
<organism>
    <name type="scientific">Pelagibacter ubique (strain HTCC1062)</name>
    <dbReference type="NCBI Taxonomy" id="335992"/>
    <lineage>
        <taxon>Bacteria</taxon>
        <taxon>Pseudomonadati</taxon>
        <taxon>Pseudomonadota</taxon>
        <taxon>Alphaproteobacteria</taxon>
        <taxon>Candidatus Pelagibacterales</taxon>
        <taxon>Candidatus Pelagibacteraceae</taxon>
        <taxon>Candidatus Pelagibacter</taxon>
    </lineage>
</organism>
<protein>
    <recommendedName>
        <fullName evidence="1">Probable nicotinate-nucleotide adenylyltransferase</fullName>
        <ecNumber evidence="1">2.7.7.18</ecNumber>
    </recommendedName>
    <alternativeName>
        <fullName evidence="1">Deamido-NAD(+) diphosphorylase</fullName>
    </alternativeName>
    <alternativeName>
        <fullName evidence="1">Deamido-NAD(+) pyrophosphorylase</fullName>
    </alternativeName>
    <alternativeName>
        <fullName evidence="1">Nicotinate mononucleotide adenylyltransferase</fullName>
        <shortName evidence="1">NaMN adenylyltransferase</shortName>
    </alternativeName>
</protein>